<dbReference type="EC" id="3.6.1.-" evidence="1"/>
<dbReference type="EMBL" id="CP000529">
    <property type="protein sequence ID" value="ABM36065.1"/>
    <property type="molecule type" value="Genomic_DNA"/>
</dbReference>
<dbReference type="RefSeq" id="WP_011800160.1">
    <property type="nucleotide sequence ID" value="NC_008781.1"/>
</dbReference>
<dbReference type="SMR" id="A1VK87"/>
<dbReference type="STRING" id="365044.Pnap_0746"/>
<dbReference type="KEGG" id="pna:Pnap_0746"/>
<dbReference type="eggNOG" id="COG0494">
    <property type="taxonomic scope" value="Bacteria"/>
</dbReference>
<dbReference type="HOGENOM" id="CLU_087195_1_1_4"/>
<dbReference type="OrthoDB" id="9816040at2"/>
<dbReference type="Proteomes" id="UP000000644">
    <property type="component" value="Chromosome"/>
</dbReference>
<dbReference type="GO" id="GO:0016462">
    <property type="term" value="F:pyrophosphatase activity"/>
    <property type="evidence" value="ECO:0007669"/>
    <property type="project" value="UniProtKB-ARBA"/>
</dbReference>
<dbReference type="CDD" id="cd03671">
    <property type="entry name" value="NUDIX_Ap4A_hydrolase_plant_like"/>
    <property type="match status" value="1"/>
</dbReference>
<dbReference type="Gene3D" id="3.90.79.10">
    <property type="entry name" value="Nucleoside Triphosphate Pyrophosphohydrolase"/>
    <property type="match status" value="1"/>
</dbReference>
<dbReference type="HAMAP" id="MF_00298">
    <property type="entry name" value="Nudix_RppH"/>
    <property type="match status" value="1"/>
</dbReference>
<dbReference type="InterPro" id="IPR020476">
    <property type="entry name" value="Nudix_hydrolase"/>
</dbReference>
<dbReference type="InterPro" id="IPR015797">
    <property type="entry name" value="NUDIX_hydrolase-like_dom_sf"/>
</dbReference>
<dbReference type="InterPro" id="IPR020084">
    <property type="entry name" value="NUDIX_hydrolase_CS"/>
</dbReference>
<dbReference type="InterPro" id="IPR000086">
    <property type="entry name" value="NUDIX_hydrolase_dom"/>
</dbReference>
<dbReference type="InterPro" id="IPR022927">
    <property type="entry name" value="RppH"/>
</dbReference>
<dbReference type="NCBIfam" id="NF001935">
    <property type="entry name" value="PRK00714.1-2"/>
    <property type="match status" value="1"/>
</dbReference>
<dbReference type="NCBIfam" id="NF001937">
    <property type="entry name" value="PRK00714.1-4"/>
    <property type="match status" value="1"/>
</dbReference>
<dbReference type="NCBIfam" id="NF001938">
    <property type="entry name" value="PRK00714.1-5"/>
    <property type="match status" value="1"/>
</dbReference>
<dbReference type="PANTHER" id="PTHR43736">
    <property type="entry name" value="ADP-RIBOSE PYROPHOSPHATASE"/>
    <property type="match status" value="1"/>
</dbReference>
<dbReference type="PANTHER" id="PTHR43736:SF1">
    <property type="entry name" value="DIHYDRONEOPTERIN TRIPHOSPHATE DIPHOSPHATASE"/>
    <property type="match status" value="1"/>
</dbReference>
<dbReference type="Pfam" id="PF00293">
    <property type="entry name" value="NUDIX"/>
    <property type="match status" value="1"/>
</dbReference>
<dbReference type="PRINTS" id="PR00502">
    <property type="entry name" value="NUDIXFAMILY"/>
</dbReference>
<dbReference type="SUPFAM" id="SSF55811">
    <property type="entry name" value="Nudix"/>
    <property type="match status" value="1"/>
</dbReference>
<dbReference type="PROSITE" id="PS51462">
    <property type="entry name" value="NUDIX"/>
    <property type="match status" value="1"/>
</dbReference>
<dbReference type="PROSITE" id="PS00893">
    <property type="entry name" value="NUDIX_BOX"/>
    <property type="match status" value="1"/>
</dbReference>
<organism>
    <name type="scientific">Polaromonas naphthalenivorans (strain CJ2)</name>
    <dbReference type="NCBI Taxonomy" id="365044"/>
    <lineage>
        <taxon>Bacteria</taxon>
        <taxon>Pseudomonadati</taxon>
        <taxon>Pseudomonadota</taxon>
        <taxon>Betaproteobacteria</taxon>
        <taxon>Burkholderiales</taxon>
        <taxon>Comamonadaceae</taxon>
        <taxon>Polaromonas</taxon>
    </lineage>
</organism>
<accession>A1VK87</accession>
<proteinExistence type="inferred from homology"/>
<protein>
    <recommendedName>
        <fullName evidence="1">RNA pyrophosphohydrolase</fullName>
        <ecNumber evidence="1">3.6.1.-</ecNumber>
    </recommendedName>
    <alternativeName>
        <fullName evidence="1">(Di)nucleoside polyphosphate hydrolase</fullName>
    </alternativeName>
</protein>
<reference key="1">
    <citation type="journal article" date="2009" name="Environ. Microbiol.">
        <title>The genome of Polaromonas naphthalenivorans strain CJ2, isolated from coal tar-contaminated sediment, reveals physiological and metabolic versatility and evolution through extensive horizontal gene transfer.</title>
        <authorList>
            <person name="Yagi J.M."/>
            <person name="Sims D."/>
            <person name="Brettin T."/>
            <person name="Bruce D."/>
            <person name="Madsen E.L."/>
        </authorList>
    </citation>
    <scope>NUCLEOTIDE SEQUENCE [LARGE SCALE GENOMIC DNA]</scope>
    <source>
        <strain>CJ2</strain>
    </source>
</reference>
<feature type="chain" id="PRO_1000021968" description="RNA pyrophosphohydrolase">
    <location>
        <begin position="1"/>
        <end position="235"/>
    </location>
</feature>
<feature type="domain" description="Nudix hydrolase" evidence="1">
    <location>
        <begin position="6"/>
        <end position="149"/>
    </location>
</feature>
<feature type="region of interest" description="Disordered" evidence="2">
    <location>
        <begin position="184"/>
        <end position="235"/>
    </location>
</feature>
<feature type="short sequence motif" description="Nudix box">
    <location>
        <begin position="38"/>
        <end position="59"/>
    </location>
</feature>
<keyword id="KW-0378">Hydrolase</keyword>
<keyword id="KW-1185">Reference proteome</keyword>
<evidence type="ECO:0000255" key="1">
    <source>
        <dbReference type="HAMAP-Rule" id="MF_00298"/>
    </source>
</evidence>
<evidence type="ECO:0000256" key="2">
    <source>
        <dbReference type="SAM" id="MobiDB-lite"/>
    </source>
</evidence>
<gene>
    <name evidence="1" type="primary">rppH</name>
    <name evidence="1" type="synonym">nudH</name>
    <name type="ordered locus">Pnap_0746</name>
</gene>
<sequence length="235" mass="27431">MLDRDGFRPNVGIILLNQRSQVFWGKRIRTHSWQFPQGGIDRGENPEQAMFRELHEEVGLHPQHVQVLARTRDWLRYEVPDRFIRRDARGHYKGQKQIWFLLQLVGHDWDLNLRATNHPEFDAWRWNDYWVPLDVVVEFKRGVYEMALTELSRFVPRCEFRFDARPEQRNRYLRGGLHQRDLLANQSGEPGSFPAAGGIPSYATRPGAPFELPPGATFEPDPQTSFGVNAPTKKT</sequence>
<comment type="function">
    <text evidence="1">Accelerates the degradation of transcripts by removing pyrophosphate from the 5'-end of triphosphorylated RNA, leading to a more labile monophosphorylated state that can stimulate subsequent ribonuclease cleavage.</text>
</comment>
<comment type="cofactor">
    <cofactor evidence="1">
        <name>a divalent metal cation</name>
        <dbReference type="ChEBI" id="CHEBI:60240"/>
    </cofactor>
</comment>
<comment type="similarity">
    <text evidence="1">Belongs to the Nudix hydrolase family. RppH subfamily.</text>
</comment>
<name>RPPH_POLNA</name>